<protein>
    <recommendedName>
        <fullName evidence="1">Short-chain-enoyl-CoA hydratase</fullName>
        <ecNumber evidence="1">4.2.1.150</ecNumber>
    </recommendedName>
    <alternativeName>
        <fullName evidence="1">3-hydroxybutyryl-CoA dehydratase</fullName>
    </alternativeName>
    <alternativeName>
        <fullName evidence="1">Crotonase</fullName>
    </alternativeName>
</protein>
<comment type="catalytic activity">
    <reaction evidence="1">
        <text>a short-chain (3S)-3-hydroxyacyl-CoA = a short-chain (2E)-enoyl-CoA + H2O</text>
        <dbReference type="Rhea" id="RHEA:52664"/>
        <dbReference type="ChEBI" id="CHEBI:15377"/>
        <dbReference type="ChEBI" id="CHEBI:87488"/>
        <dbReference type="ChEBI" id="CHEBI:136760"/>
        <dbReference type="EC" id="4.2.1.150"/>
    </reaction>
</comment>
<comment type="pathway">
    <text>Lipid metabolism; butanoate metabolism.</text>
</comment>
<comment type="similarity">
    <text evidence="2">Belongs to the enoyl-CoA hydratase/isomerase family.</text>
</comment>
<proteinExistence type="inferred from homology"/>
<sequence length="155" mass="16581">NSKKVVIAAVNGFALGGCELAMACDIRIASAKAKFGQPEVTLGITPGYGGTQRLTRLVGMAKAKELIFTGQVIKADEAEKIGLVNRVVEPDILIEEVEKLAKIIAKNAQLAVRYSKEAIQLGAQTDINTGIDIESNLFGLCFSTKDQKEGIVSFR</sequence>
<accession>P45361</accession>
<feature type="chain" id="PRO_0000109318" description="Short-chain-enoyl-CoA hydratase">
    <location>
        <begin position="1" status="less than"/>
        <end position="155"/>
    </location>
</feature>
<feature type="non-terminal residue">
    <location>
        <position position="1"/>
    </location>
</feature>
<name>CRT_CLODI</name>
<dbReference type="EC" id="4.2.1.150" evidence="1"/>
<dbReference type="EMBL" id="X79899">
    <property type="protein sequence ID" value="CAA56274.1"/>
    <property type="molecule type" value="Genomic_DNA"/>
</dbReference>
<dbReference type="PIR" id="I40678">
    <property type="entry name" value="I40678"/>
</dbReference>
<dbReference type="SMR" id="P45361"/>
<dbReference type="UniPathway" id="UPA00863"/>
<dbReference type="GO" id="GO:0016829">
    <property type="term" value="F:lyase activity"/>
    <property type="evidence" value="ECO:0007669"/>
    <property type="project" value="UniProtKB-KW"/>
</dbReference>
<dbReference type="GO" id="GO:0019605">
    <property type="term" value="P:butyrate metabolic process"/>
    <property type="evidence" value="ECO:0007669"/>
    <property type="project" value="UniProtKB-UniPathway"/>
</dbReference>
<dbReference type="GO" id="GO:0006635">
    <property type="term" value="P:fatty acid beta-oxidation"/>
    <property type="evidence" value="ECO:0007669"/>
    <property type="project" value="TreeGrafter"/>
</dbReference>
<dbReference type="CDD" id="cd06558">
    <property type="entry name" value="crotonase-like"/>
    <property type="match status" value="1"/>
</dbReference>
<dbReference type="FunFam" id="1.10.12.10:FF:000001">
    <property type="entry name" value="Probable enoyl-CoA hydratase, mitochondrial"/>
    <property type="match status" value="1"/>
</dbReference>
<dbReference type="Gene3D" id="3.90.226.10">
    <property type="entry name" value="2-enoyl-CoA Hydratase, Chain A, domain 1"/>
    <property type="match status" value="1"/>
</dbReference>
<dbReference type="Gene3D" id="1.10.12.10">
    <property type="entry name" value="Lyase 2-enoyl-coa Hydratase, Chain A, domain 2"/>
    <property type="match status" value="1"/>
</dbReference>
<dbReference type="InterPro" id="IPR029045">
    <property type="entry name" value="ClpP/crotonase-like_dom_sf"/>
</dbReference>
<dbReference type="InterPro" id="IPR001753">
    <property type="entry name" value="Enoyl-CoA_hydra/iso"/>
</dbReference>
<dbReference type="InterPro" id="IPR014748">
    <property type="entry name" value="Enoyl-CoA_hydra_C"/>
</dbReference>
<dbReference type="PANTHER" id="PTHR11941:SF54">
    <property type="entry name" value="ENOYL-COA HYDRATASE, MITOCHONDRIAL"/>
    <property type="match status" value="1"/>
</dbReference>
<dbReference type="PANTHER" id="PTHR11941">
    <property type="entry name" value="ENOYL-COA HYDRATASE-RELATED"/>
    <property type="match status" value="1"/>
</dbReference>
<dbReference type="Pfam" id="PF00378">
    <property type="entry name" value="ECH_1"/>
    <property type="match status" value="1"/>
</dbReference>
<dbReference type="SUPFAM" id="SSF52096">
    <property type="entry name" value="ClpP/crotonase"/>
    <property type="match status" value="1"/>
</dbReference>
<keyword id="KW-0276">Fatty acid metabolism</keyword>
<keyword id="KW-0443">Lipid metabolism</keyword>
<keyword id="KW-0456">Lyase</keyword>
<evidence type="ECO:0000250" key="1">
    <source>
        <dbReference type="UniProtKB" id="P52046"/>
    </source>
</evidence>
<evidence type="ECO:0000305" key="2"/>
<gene>
    <name type="primary">crt</name>
    <name type="synonym">ech</name>
</gene>
<organism>
    <name type="scientific">Clostridioides difficile</name>
    <name type="common">Peptoclostridium difficile</name>
    <dbReference type="NCBI Taxonomy" id="1496"/>
    <lineage>
        <taxon>Bacteria</taxon>
        <taxon>Bacillati</taxon>
        <taxon>Bacillota</taxon>
        <taxon>Clostridia</taxon>
        <taxon>Peptostreptococcales</taxon>
        <taxon>Peptostreptococcaceae</taxon>
        <taxon>Clostridioides</taxon>
    </lineage>
</organism>
<reference key="1">
    <citation type="journal article" date="1994" name="FEMS Microbiol. Lett.">
        <title>Genes encoding homologues of three consecutive enzymes in the butyrate/butanol-producing pathway of Clostridium acetobutylicum are clustered on the Clostridium difficile chromosome.</title>
        <authorList>
            <person name="Mullany P."/>
            <person name="Clayton C.L."/>
            <person name="Pallen M.J."/>
            <person name="Slone R."/>
            <person name="Al-Saleh A."/>
            <person name="Tabaqchali S."/>
        </authorList>
    </citation>
    <scope>NUCLEOTIDE SEQUENCE [GENOMIC DNA]</scope>
    <source>
        <strain>E</strain>
    </source>
</reference>